<accession>P55665</accession>
<evidence type="ECO:0000305" key="1"/>
<proteinExistence type="inferred from homology"/>
<name>Y4TK_SINFN</name>
<reference key="1">
    <citation type="journal article" date="1997" name="Nature">
        <title>Molecular basis of symbiosis between Rhizobium and legumes.</title>
        <authorList>
            <person name="Freiberg C.A."/>
            <person name="Fellay R."/>
            <person name="Bairoch A."/>
            <person name="Broughton W.J."/>
            <person name="Rosenthal A."/>
            <person name="Perret X."/>
        </authorList>
    </citation>
    <scope>NUCLEOTIDE SEQUENCE [LARGE SCALE GENOMIC DNA]</scope>
    <source>
        <strain>NBRC 101917 / NGR234</strain>
    </source>
</reference>
<reference key="2">
    <citation type="journal article" date="2009" name="Appl. Environ. Microbiol.">
        <title>Rhizobium sp. strain NGR234 possesses a remarkable number of secretion systems.</title>
        <authorList>
            <person name="Schmeisser C."/>
            <person name="Liesegang H."/>
            <person name="Krysciak D."/>
            <person name="Bakkou N."/>
            <person name="Le Quere A."/>
            <person name="Wollherr A."/>
            <person name="Heinemeyer I."/>
            <person name="Morgenstern B."/>
            <person name="Pommerening-Roeser A."/>
            <person name="Flores M."/>
            <person name="Palacios R."/>
            <person name="Brenner S."/>
            <person name="Gottschalk G."/>
            <person name="Schmitz R.A."/>
            <person name="Broughton W.J."/>
            <person name="Perret X."/>
            <person name="Strittmatter A.W."/>
            <person name="Streit W.R."/>
        </authorList>
    </citation>
    <scope>NUCLEOTIDE SEQUENCE [LARGE SCALE GENOMIC DNA]</scope>
    <source>
        <strain>NBRC 101917 / NGR234</strain>
    </source>
</reference>
<protein>
    <recommendedName>
        <fullName>Uncharacterized cyclodeaminase y4tK</fullName>
        <ecNumber>4.3.1.-</ecNumber>
    </recommendedName>
</protein>
<geneLocation type="plasmid">
    <name>sym pNGR234a</name>
</geneLocation>
<organism>
    <name type="scientific">Sinorhizobium fredii (strain NBRC 101917 / NGR234)</name>
    <dbReference type="NCBI Taxonomy" id="394"/>
    <lineage>
        <taxon>Bacteria</taxon>
        <taxon>Pseudomonadati</taxon>
        <taxon>Pseudomonadota</taxon>
        <taxon>Alphaproteobacteria</taxon>
        <taxon>Hyphomicrobiales</taxon>
        <taxon>Rhizobiaceae</taxon>
        <taxon>Sinorhizobium/Ensifer group</taxon>
        <taxon>Sinorhizobium</taxon>
    </lineage>
</organism>
<sequence length="331" mass="35207">MPTMKILTEGELRQIVPLDLDAVKCTEDAFRALAVPNAVKMPPILRLDVPDSRGEVDVKTAYIPGLGGFAIKISPGFFDNPKIGLPSTNGMMVLLSSQTGLVQALLLDNGYLTDVRTAAAGAVAAKHLSQQDASVATIFGAGVQARLQLRALTLVRPIRQARIWARDQLKAEALVEQLKLEHSFAISASDDPRQAVSGAHIVVTTTPADRPILVASWLEAGQHVTAMGSDAEHKNELDPAAIARADVYVADSLTQTRRLGELHHAIEAGLIARDAAFPELGEVIAGVKTGRTRESDITIADLTGTGVQDTAIATLAFQRAEERSAGSLFES</sequence>
<keyword id="KW-0456">Lyase</keyword>
<keyword id="KW-0520">NAD</keyword>
<keyword id="KW-0614">Plasmid</keyword>
<keyword id="KW-1185">Reference proteome</keyword>
<dbReference type="EC" id="4.3.1.-"/>
<dbReference type="EMBL" id="U00090">
    <property type="protein sequence ID" value="AAB91864.1"/>
    <property type="molecule type" value="Genomic_DNA"/>
</dbReference>
<dbReference type="RefSeq" id="NP_444077.1">
    <property type="nucleotide sequence ID" value="NC_000914.2"/>
</dbReference>
<dbReference type="RefSeq" id="WP_010875186.1">
    <property type="nucleotide sequence ID" value="NC_000914.2"/>
</dbReference>
<dbReference type="SMR" id="P55665"/>
<dbReference type="KEGG" id="rhi:NGR_a01480"/>
<dbReference type="PATRIC" id="fig|394.7.peg.133"/>
<dbReference type="eggNOG" id="COG2423">
    <property type="taxonomic scope" value="Bacteria"/>
</dbReference>
<dbReference type="HOGENOM" id="CLU_042088_2_0_5"/>
<dbReference type="OrthoDB" id="9809203at2"/>
<dbReference type="Proteomes" id="UP000001054">
    <property type="component" value="Plasmid pNGR234a"/>
</dbReference>
<dbReference type="GO" id="GO:0005737">
    <property type="term" value="C:cytoplasm"/>
    <property type="evidence" value="ECO:0007669"/>
    <property type="project" value="TreeGrafter"/>
</dbReference>
<dbReference type="GO" id="GO:0016829">
    <property type="term" value="F:lyase activity"/>
    <property type="evidence" value="ECO:0007669"/>
    <property type="project" value="UniProtKB-KW"/>
</dbReference>
<dbReference type="FunFam" id="3.40.50.720:FF:000311">
    <property type="entry name" value="Ornithine cyclodeaminase"/>
    <property type="match status" value="1"/>
</dbReference>
<dbReference type="Gene3D" id="3.40.50.720">
    <property type="entry name" value="NAD(P)-binding Rossmann-like Domain"/>
    <property type="match status" value="1"/>
</dbReference>
<dbReference type="Gene3D" id="3.30.1780.10">
    <property type="entry name" value="ornithine cyclodeaminase, domain 1"/>
    <property type="match status" value="1"/>
</dbReference>
<dbReference type="InterPro" id="IPR014334">
    <property type="entry name" value="Ectoine_EutC"/>
</dbReference>
<dbReference type="InterPro" id="IPR036291">
    <property type="entry name" value="NAD(P)-bd_dom_sf"/>
</dbReference>
<dbReference type="InterPro" id="IPR003462">
    <property type="entry name" value="ODC_Mu_crystall"/>
</dbReference>
<dbReference type="InterPro" id="IPR023401">
    <property type="entry name" value="ODC_N"/>
</dbReference>
<dbReference type="NCBIfam" id="TIGR02992">
    <property type="entry name" value="ectoine_eutC"/>
    <property type="match status" value="1"/>
</dbReference>
<dbReference type="NCBIfam" id="NF006141">
    <property type="entry name" value="PRK08291.1"/>
    <property type="match status" value="1"/>
</dbReference>
<dbReference type="PANTHER" id="PTHR13812">
    <property type="entry name" value="KETIMINE REDUCTASE MU-CRYSTALLIN"/>
    <property type="match status" value="1"/>
</dbReference>
<dbReference type="PANTHER" id="PTHR13812:SF19">
    <property type="entry name" value="KETIMINE REDUCTASE MU-CRYSTALLIN"/>
    <property type="match status" value="1"/>
</dbReference>
<dbReference type="Pfam" id="PF02423">
    <property type="entry name" value="OCD_Mu_crystall"/>
    <property type="match status" value="1"/>
</dbReference>
<dbReference type="PIRSF" id="PIRSF001439">
    <property type="entry name" value="CryM"/>
    <property type="match status" value="1"/>
</dbReference>
<dbReference type="SUPFAM" id="SSF51735">
    <property type="entry name" value="NAD(P)-binding Rossmann-fold domains"/>
    <property type="match status" value="1"/>
</dbReference>
<comment type="similarity">
    <text evidence="1">Belongs to the ornithine cyclodeaminase/mu-crystallin family.</text>
</comment>
<gene>
    <name type="ordered locus">NGR_a01480</name>
    <name type="ORF">y4tK</name>
</gene>
<feature type="chain" id="PRO_0000200676" description="Uncharacterized cyclodeaminase y4tK">
    <location>
        <begin position="1"/>
        <end position="331"/>
    </location>
</feature>